<reference key="1">
    <citation type="submission" date="2007-07" db="EMBL/GenBank/DDBJ databases">
        <authorList>
            <consortium name="NIH - Mammalian Gene Collection (MGC) project"/>
        </authorList>
    </citation>
    <scope>NUCLEOTIDE SEQUENCE [LARGE SCALE MRNA]</scope>
    <source>
        <strain>Hereford</strain>
        <tissue>Basal ganglia</tissue>
    </source>
</reference>
<sequence>MSGLQSVDWQIASNRQAHHTERFYGKDLLVRRGQLFQVSLTLSQGLSSGGRVTFTASTGPYPSESANTKAVFPLSNGTSSSGWGAQLVSSRNNVLNISILSPANAPIGRYTLNMQISSQGSDSTLKLGTFILLFNPWLQADSVFMSNHAEREEYVQEDAGIIFVGSTNRISMIGWNYGQFEEGILNICLSVLDNSLNFRRDPATDVAHRNDPKYVGRVLSAMINGNDDSGVISGNWSGSYTGGRDPRNWNGSVEILKEWQRSGFRPVRYGQCWVFAGTLNTVLRCLGIPSRVITNFNSAHDTDQNLSVDVYYDPLGRPMDKGSDSVWNFHVWNEAWFVRSDLGPSYNGWQVLDATPQERSQGVFQCGPASVIAIREGNVDWDFDMPFIFAEVNADRITWIYESNGALKKNSADTHSVGKHISTKAVGSNSRMDVTEKYKYPEGSSQERQVFEKALRKLKPTMSFSATSASSLAREEREPSISGRFKVAGVLTVGKEVNLILMLKNLTSDTKTVTVNMTAWTIVYNGTLVHEVWKDSVTKSLNPEEEIEHPVKIAYAQYEKYLKADNMIRTTAVCQVTDEPEVVVERDIILDNPTLTLEVLDEARVQKPVNVQMLFSNPLDEPVKDCVLMVEGSGLLLGNLKIDVPALRPKERSRVRFEILPTRSGTKQLLANFSCNKFPAIKAMLSVDVAE</sequence>
<protein>
    <recommendedName>
        <fullName>Protein-glutamine gamma-glutamyltransferase E</fullName>
        <ecNumber evidence="2">2.3.2.13</ecNumber>
    </recommendedName>
    <alternativeName>
        <fullName>Transglutaminase E</fullName>
        <shortName>TG(E)</shortName>
        <shortName>TGE</shortName>
        <shortName>TGase E</shortName>
    </alternativeName>
    <alternativeName>
        <fullName>Transglutaminase-3</fullName>
        <shortName>TGase-3</shortName>
    </alternativeName>
    <component>
        <recommendedName>
            <fullName>Protein-glutamine gamma-glutamyltransferase E 50 kDa catalytic chain</fullName>
        </recommendedName>
    </component>
    <component>
        <recommendedName>
            <fullName>Protein-glutamine gamma-glutamyltransferase E 27 kDa non-catalytic chain</fullName>
        </recommendedName>
    </component>
</protein>
<proteinExistence type="evidence at transcript level"/>
<name>TGM3_BOVIN</name>
<dbReference type="EC" id="2.3.2.13" evidence="2"/>
<dbReference type="EMBL" id="BC149161">
    <property type="protein sequence ID" value="AAI49162.1"/>
    <property type="molecule type" value="mRNA"/>
</dbReference>
<dbReference type="RefSeq" id="NP_001095318.1">
    <property type="nucleotide sequence ID" value="NM_001101848.1"/>
</dbReference>
<dbReference type="SMR" id="A6QP57"/>
<dbReference type="FunCoup" id="A6QP57">
    <property type="interactions" value="92"/>
</dbReference>
<dbReference type="STRING" id="9913.ENSBTAP00000058423"/>
<dbReference type="PaxDb" id="9913-ENSBTAP00000006432"/>
<dbReference type="PeptideAtlas" id="A6QP57"/>
<dbReference type="GeneID" id="505080"/>
<dbReference type="KEGG" id="bta:505080"/>
<dbReference type="CTD" id="7053"/>
<dbReference type="eggNOG" id="ENOG502QUPB">
    <property type="taxonomic scope" value="Eukaryota"/>
</dbReference>
<dbReference type="InParanoid" id="A6QP57"/>
<dbReference type="OrthoDB" id="437511at2759"/>
<dbReference type="Proteomes" id="UP000009136">
    <property type="component" value="Unplaced"/>
</dbReference>
<dbReference type="GO" id="GO:0005737">
    <property type="term" value="C:cytoplasm"/>
    <property type="evidence" value="ECO:0000250"/>
    <property type="project" value="UniProtKB"/>
</dbReference>
<dbReference type="GO" id="GO:0005509">
    <property type="term" value="F:calcium ion binding"/>
    <property type="evidence" value="ECO:0000250"/>
    <property type="project" value="UniProtKB"/>
</dbReference>
<dbReference type="GO" id="GO:0003810">
    <property type="term" value="F:protein-glutamine gamma-glutamyltransferase activity"/>
    <property type="evidence" value="ECO:0000250"/>
    <property type="project" value="UniProtKB"/>
</dbReference>
<dbReference type="GO" id="GO:0031424">
    <property type="term" value="P:keratinization"/>
    <property type="evidence" value="ECO:0007669"/>
    <property type="project" value="UniProtKB-KW"/>
</dbReference>
<dbReference type="GO" id="GO:0030216">
    <property type="term" value="P:keratinocyte differentiation"/>
    <property type="evidence" value="ECO:0000318"/>
    <property type="project" value="GO_Central"/>
</dbReference>
<dbReference type="GO" id="GO:0018149">
    <property type="term" value="P:peptide cross-linking"/>
    <property type="evidence" value="ECO:0000250"/>
    <property type="project" value="UniProtKB"/>
</dbReference>
<dbReference type="FunFam" id="2.60.40.10:FF:000090">
    <property type="entry name" value="Protein-glutamine gamma-glutamyltransferase 2"/>
    <property type="match status" value="1"/>
</dbReference>
<dbReference type="FunFam" id="2.60.40.10:FF:000278">
    <property type="entry name" value="Protein-glutamine gamma-glutamyltransferase 2"/>
    <property type="match status" value="1"/>
</dbReference>
<dbReference type="FunFam" id="3.90.260.10:FF:000001">
    <property type="entry name" value="Protein-glutamine gamma-glutamyltransferase 2"/>
    <property type="match status" value="1"/>
</dbReference>
<dbReference type="FunFam" id="2.60.40.10:FF:000171">
    <property type="entry name" value="protein-glutamine gamma-glutamyltransferase 6"/>
    <property type="match status" value="1"/>
</dbReference>
<dbReference type="Gene3D" id="2.60.40.10">
    <property type="entry name" value="Immunoglobulins"/>
    <property type="match status" value="3"/>
</dbReference>
<dbReference type="Gene3D" id="3.90.260.10">
    <property type="entry name" value="Transglutaminase-like"/>
    <property type="match status" value="1"/>
</dbReference>
<dbReference type="InterPro" id="IPR013783">
    <property type="entry name" value="Ig-like_fold"/>
</dbReference>
<dbReference type="InterPro" id="IPR014756">
    <property type="entry name" value="Ig_E-set"/>
</dbReference>
<dbReference type="InterPro" id="IPR038765">
    <property type="entry name" value="Papain-like_cys_pep_sf"/>
</dbReference>
<dbReference type="InterPro" id="IPR050779">
    <property type="entry name" value="Transglutaminase"/>
</dbReference>
<dbReference type="InterPro" id="IPR002931">
    <property type="entry name" value="Transglutaminase-like"/>
</dbReference>
<dbReference type="InterPro" id="IPR036985">
    <property type="entry name" value="Transglutaminase-like_sf"/>
</dbReference>
<dbReference type="InterPro" id="IPR023608">
    <property type="entry name" value="Transglutaminase_animal"/>
</dbReference>
<dbReference type="InterPro" id="IPR013808">
    <property type="entry name" value="Transglutaminase_AS"/>
</dbReference>
<dbReference type="InterPro" id="IPR008958">
    <property type="entry name" value="Transglutaminase_C"/>
</dbReference>
<dbReference type="InterPro" id="IPR036238">
    <property type="entry name" value="Transglutaminase_C_sf"/>
</dbReference>
<dbReference type="InterPro" id="IPR001102">
    <property type="entry name" value="Transglutaminase_N"/>
</dbReference>
<dbReference type="PANTHER" id="PTHR11590">
    <property type="entry name" value="PROTEIN-GLUTAMINE GAMMA-GLUTAMYLTRANSFERASE"/>
    <property type="match status" value="1"/>
</dbReference>
<dbReference type="PANTHER" id="PTHR11590:SF36">
    <property type="entry name" value="PROTEIN-GLUTAMINE GAMMA-GLUTAMYLTRANSFERASE E"/>
    <property type="match status" value="1"/>
</dbReference>
<dbReference type="Pfam" id="PF00927">
    <property type="entry name" value="Transglut_C"/>
    <property type="match status" value="2"/>
</dbReference>
<dbReference type="Pfam" id="PF01841">
    <property type="entry name" value="Transglut_core"/>
    <property type="match status" value="1"/>
</dbReference>
<dbReference type="Pfam" id="PF00868">
    <property type="entry name" value="Transglut_N"/>
    <property type="match status" value="1"/>
</dbReference>
<dbReference type="PIRSF" id="PIRSF000459">
    <property type="entry name" value="TGM_EBP42"/>
    <property type="match status" value="1"/>
</dbReference>
<dbReference type="SMART" id="SM00460">
    <property type="entry name" value="TGc"/>
    <property type="match status" value="1"/>
</dbReference>
<dbReference type="SUPFAM" id="SSF54001">
    <property type="entry name" value="Cysteine proteinases"/>
    <property type="match status" value="1"/>
</dbReference>
<dbReference type="SUPFAM" id="SSF81296">
    <property type="entry name" value="E set domains"/>
    <property type="match status" value="1"/>
</dbReference>
<dbReference type="SUPFAM" id="SSF49309">
    <property type="entry name" value="Transglutaminase, two C-terminal domains"/>
    <property type="match status" value="2"/>
</dbReference>
<dbReference type="PROSITE" id="PS00547">
    <property type="entry name" value="TRANSGLUTAMINASES"/>
    <property type="match status" value="1"/>
</dbReference>
<gene>
    <name type="primary">TGM3</name>
</gene>
<accession>A6QP57</accession>
<organism>
    <name type="scientific">Bos taurus</name>
    <name type="common">Bovine</name>
    <dbReference type="NCBI Taxonomy" id="9913"/>
    <lineage>
        <taxon>Eukaryota</taxon>
        <taxon>Metazoa</taxon>
        <taxon>Chordata</taxon>
        <taxon>Craniata</taxon>
        <taxon>Vertebrata</taxon>
        <taxon>Euteleostomi</taxon>
        <taxon>Mammalia</taxon>
        <taxon>Eutheria</taxon>
        <taxon>Laurasiatheria</taxon>
        <taxon>Artiodactyla</taxon>
        <taxon>Ruminantia</taxon>
        <taxon>Pecora</taxon>
        <taxon>Bovidae</taxon>
        <taxon>Bovinae</taxon>
        <taxon>Bos</taxon>
    </lineage>
</organism>
<keyword id="KW-0012">Acyltransferase</keyword>
<keyword id="KW-0106">Calcium</keyword>
<keyword id="KW-0963">Cytoplasm</keyword>
<keyword id="KW-0417">Keratinization</keyword>
<keyword id="KW-0479">Metal-binding</keyword>
<keyword id="KW-0597">Phosphoprotein</keyword>
<keyword id="KW-1185">Reference proteome</keyword>
<keyword id="KW-0808">Transferase</keyword>
<keyword id="KW-0865">Zymogen</keyword>
<feature type="chain" id="PRO_0000408949" description="Protein-glutamine gamma-glutamyltransferase E 50 kDa catalytic chain">
    <location>
        <begin position="1"/>
        <end position="465"/>
    </location>
</feature>
<feature type="chain" id="PRO_0000408950" description="Protein-glutamine gamma-glutamyltransferase E 27 kDa non-catalytic chain">
    <location>
        <begin position="466"/>
        <end position="691"/>
    </location>
</feature>
<feature type="active site" evidence="3">
    <location>
        <position position="272"/>
    </location>
</feature>
<feature type="active site" evidence="3">
    <location>
        <position position="330"/>
    </location>
</feature>
<feature type="active site" evidence="3">
    <location>
        <position position="353"/>
    </location>
</feature>
<feature type="binding site" evidence="1">
    <location>
        <position position="221"/>
    </location>
    <ligand>
        <name>Ca(2+)</name>
        <dbReference type="ChEBI" id="CHEBI:29108"/>
        <label>1</label>
    </ligand>
</feature>
<feature type="binding site" evidence="1">
    <location>
        <position position="224"/>
    </location>
    <ligand>
        <name>Ca(2+)</name>
        <dbReference type="ChEBI" id="CHEBI:29108"/>
        <label>1</label>
    </ligand>
</feature>
<feature type="binding site" evidence="1">
    <location>
        <position position="226"/>
    </location>
    <ligand>
        <name>Ca(2+)</name>
        <dbReference type="ChEBI" id="CHEBI:29108"/>
        <label>1</label>
    </ligand>
</feature>
<feature type="binding site" evidence="1">
    <location>
        <position position="227"/>
    </location>
    <ligand>
        <name>Ca(2+)</name>
        <dbReference type="ChEBI" id="CHEBI:29108"/>
        <label>1</label>
    </ligand>
</feature>
<feature type="binding site" evidence="1">
    <location>
        <position position="301"/>
    </location>
    <ligand>
        <name>Ca(2+)</name>
        <dbReference type="ChEBI" id="CHEBI:29108"/>
        <label>2</label>
    </ligand>
</feature>
<feature type="binding site" evidence="1">
    <location>
        <position position="303"/>
    </location>
    <ligand>
        <name>Ca(2+)</name>
        <dbReference type="ChEBI" id="CHEBI:29108"/>
        <label>2</label>
    </ligand>
</feature>
<feature type="binding site" evidence="1">
    <location>
        <position position="305"/>
    </location>
    <ligand>
        <name>Ca(2+)</name>
        <dbReference type="ChEBI" id="CHEBI:29108"/>
        <label>2</label>
    </ligand>
</feature>
<feature type="binding site" evidence="1">
    <location>
        <position position="307"/>
    </location>
    <ligand>
        <name>Ca(2+)</name>
        <dbReference type="ChEBI" id="CHEBI:29108"/>
        <label>2</label>
    </ligand>
</feature>
<feature type="binding site" evidence="1">
    <location>
        <position position="324"/>
    </location>
    <ligand>
        <name>Ca(2+)</name>
        <dbReference type="ChEBI" id="CHEBI:29108"/>
        <label>2</label>
    </ligand>
</feature>
<feature type="binding site" evidence="1">
    <location>
        <position position="393"/>
    </location>
    <ligand>
        <name>Ca(2+)</name>
        <dbReference type="ChEBI" id="CHEBI:29108"/>
        <label>3</label>
    </ligand>
</feature>
<feature type="binding site" evidence="1">
    <location>
        <position position="414"/>
    </location>
    <ligand>
        <name>Ca(2+)</name>
        <dbReference type="ChEBI" id="CHEBI:29108"/>
        <label>3</label>
    </ligand>
</feature>
<feature type="binding site" evidence="1">
    <location>
        <position position="442"/>
    </location>
    <ligand>
        <name>Ca(2+)</name>
        <dbReference type="ChEBI" id="CHEBI:29108"/>
        <label>3</label>
    </ligand>
</feature>
<feature type="binding site" evidence="1">
    <location>
        <position position="447"/>
    </location>
    <ligand>
        <name>Ca(2+)</name>
        <dbReference type="ChEBI" id="CHEBI:29108"/>
        <label>3</label>
    </ligand>
</feature>
<feature type="site" description="Cleavage; by CTSL">
    <location>
        <begin position="465"/>
        <end position="466"/>
    </location>
</feature>
<feature type="modified residue" description="Phosphotyrosine" evidence="2">
    <location>
        <position position="110"/>
    </location>
</feature>
<feature type="modified residue" description="Phosphothreonine" evidence="2">
    <location>
        <position position="111"/>
    </location>
</feature>
<comment type="function">
    <text evidence="1">Catalyzes the calcium-dependent formation of isopeptide cross-links between glutamine and lysine residues in various proteins, as well as the conjugation of polyamines to proteins. Involved in the formation of the cornified envelope (CE), a specialized component consisting of covalent cross-links of proteins beneath the plasma membrane of terminally differentiated keratinocytes. Catalyzes small proline-rich proteins and LOR cross-linking to form small interchain oligomers, which are further cross-linked by TGM1 onto the growing CE scaffold. In hair follicles, involved in cross-linking structural proteins to hardening the inner root sheath (By similarity).</text>
</comment>
<comment type="catalytic activity">
    <reaction evidence="2 3">
        <text>L-glutaminyl-[protein] + L-lysyl-[protein] = [protein]-L-lysyl-N(6)-5-L-glutamyl-[protein] + NH4(+)</text>
        <dbReference type="Rhea" id="RHEA:54816"/>
        <dbReference type="Rhea" id="RHEA-COMP:9752"/>
        <dbReference type="Rhea" id="RHEA-COMP:10207"/>
        <dbReference type="Rhea" id="RHEA-COMP:14005"/>
        <dbReference type="ChEBI" id="CHEBI:28938"/>
        <dbReference type="ChEBI" id="CHEBI:29969"/>
        <dbReference type="ChEBI" id="CHEBI:30011"/>
        <dbReference type="ChEBI" id="CHEBI:138370"/>
        <dbReference type="EC" id="2.3.2.13"/>
    </reaction>
</comment>
<comment type="cofactor">
    <cofactor evidence="1">
        <name>Ca(2+)</name>
        <dbReference type="ChEBI" id="CHEBI:29108"/>
    </cofactor>
    <text evidence="1">Binds 3 Ca(2+) cations per subunit. Binds 1 Ca(2+) as a zymogen, and binds 2 more Ca(2+) cations, or other divalent metal cations, after proteolytic processing.</text>
</comment>
<comment type="subunit">
    <text evidence="1">Consists of two polypeptide chains, which are synthesized as a precursor form of a single polypeptide.</text>
</comment>
<comment type="subcellular location">
    <subcellularLocation>
        <location evidence="2">Cytoplasm</location>
    </subcellularLocation>
</comment>
<comment type="PTM">
    <text evidence="1">Activated by proteolytic processing. In vitro activation is commonly achieved by cleavage with dispase, a neutral bacterial protease. Physiological activation may be catalyzed by CTSL and, to a lesser extent, by CTSS (By similarity).</text>
</comment>
<comment type="similarity">
    <text evidence="4">Belongs to the transglutaminase superfamily. Transglutaminase family.</text>
</comment>
<evidence type="ECO:0000250" key="1"/>
<evidence type="ECO:0000250" key="2">
    <source>
        <dbReference type="UniProtKB" id="Q08188"/>
    </source>
</evidence>
<evidence type="ECO:0000255" key="3">
    <source>
        <dbReference type="PROSITE-ProRule" id="PRU10024"/>
    </source>
</evidence>
<evidence type="ECO:0000305" key="4"/>